<dbReference type="EC" id="6.3.2.9"/>
<dbReference type="EMBL" id="U94707">
    <property type="protein sequence ID" value="AAC45635.1"/>
    <property type="molecule type" value="Genomic_DNA"/>
</dbReference>
<dbReference type="EMBL" id="AE016830">
    <property type="protein sequence ID" value="AAO80799.1"/>
    <property type="molecule type" value="Genomic_DNA"/>
</dbReference>
<dbReference type="RefSeq" id="NP_814729.1">
    <property type="nucleotide sequence ID" value="NC_004668.1"/>
</dbReference>
<dbReference type="RefSeq" id="WP_002379203.1">
    <property type="nucleotide sequence ID" value="NZ_KE136527.1"/>
</dbReference>
<dbReference type="SMR" id="O07108"/>
<dbReference type="STRING" id="226185.EF_0993"/>
<dbReference type="EnsemblBacteria" id="AAO80799">
    <property type="protein sequence ID" value="AAO80799"/>
    <property type="gene ID" value="EF_0993"/>
</dbReference>
<dbReference type="KEGG" id="efa:EF0993"/>
<dbReference type="PATRIC" id="fig|226185.45.peg.3199"/>
<dbReference type="eggNOG" id="COG0771">
    <property type="taxonomic scope" value="Bacteria"/>
</dbReference>
<dbReference type="HOGENOM" id="CLU_032540_0_1_9"/>
<dbReference type="SABIO-RK" id="O07108"/>
<dbReference type="UniPathway" id="UPA00219"/>
<dbReference type="Proteomes" id="UP000001415">
    <property type="component" value="Chromosome"/>
</dbReference>
<dbReference type="GO" id="GO:0005737">
    <property type="term" value="C:cytoplasm"/>
    <property type="evidence" value="ECO:0007669"/>
    <property type="project" value="UniProtKB-SubCell"/>
</dbReference>
<dbReference type="GO" id="GO:0005524">
    <property type="term" value="F:ATP binding"/>
    <property type="evidence" value="ECO:0007669"/>
    <property type="project" value="UniProtKB-UniRule"/>
</dbReference>
<dbReference type="GO" id="GO:0008764">
    <property type="term" value="F:UDP-N-acetylmuramoylalanine-D-glutamate ligase activity"/>
    <property type="evidence" value="ECO:0007669"/>
    <property type="project" value="UniProtKB-UniRule"/>
</dbReference>
<dbReference type="GO" id="GO:0051301">
    <property type="term" value="P:cell division"/>
    <property type="evidence" value="ECO:0007669"/>
    <property type="project" value="UniProtKB-KW"/>
</dbReference>
<dbReference type="GO" id="GO:0071555">
    <property type="term" value="P:cell wall organization"/>
    <property type="evidence" value="ECO:0007669"/>
    <property type="project" value="UniProtKB-KW"/>
</dbReference>
<dbReference type="GO" id="GO:0009252">
    <property type="term" value="P:peptidoglycan biosynthetic process"/>
    <property type="evidence" value="ECO:0007669"/>
    <property type="project" value="UniProtKB-UniRule"/>
</dbReference>
<dbReference type="GO" id="GO:0008360">
    <property type="term" value="P:regulation of cell shape"/>
    <property type="evidence" value="ECO:0007669"/>
    <property type="project" value="UniProtKB-KW"/>
</dbReference>
<dbReference type="Gene3D" id="3.90.190.20">
    <property type="entry name" value="Mur ligase, C-terminal domain"/>
    <property type="match status" value="1"/>
</dbReference>
<dbReference type="Gene3D" id="3.40.1190.10">
    <property type="entry name" value="Mur-like, catalytic domain"/>
    <property type="match status" value="1"/>
</dbReference>
<dbReference type="Gene3D" id="3.40.50.720">
    <property type="entry name" value="NAD(P)-binding Rossmann-like Domain"/>
    <property type="match status" value="1"/>
</dbReference>
<dbReference type="HAMAP" id="MF_00639">
    <property type="entry name" value="MurD"/>
    <property type="match status" value="1"/>
</dbReference>
<dbReference type="InterPro" id="IPR036565">
    <property type="entry name" value="Mur-like_cat_sf"/>
</dbReference>
<dbReference type="InterPro" id="IPR004101">
    <property type="entry name" value="Mur_ligase_C"/>
</dbReference>
<dbReference type="InterPro" id="IPR036615">
    <property type="entry name" value="Mur_ligase_C_dom_sf"/>
</dbReference>
<dbReference type="InterPro" id="IPR013221">
    <property type="entry name" value="Mur_ligase_cen"/>
</dbReference>
<dbReference type="InterPro" id="IPR005762">
    <property type="entry name" value="MurD"/>
</dbReference>
<dbReference type="NCBIfam" id="TIGR01087">
    <property type="entry name" value="murD"/>
    <property type="match status" value="1"/>
</dbReference>
<dbReference type="PANTHER" id="PTHR43692">
    <property type="entry name" value="UDP-N-ACETYLMURAMOYLALANINE--D-GLUTAMATE LIGASE"/>
    <property type="match status" value="1"/>
</dbReference>
<dbReference type="PANTHER" id="PTHR43692:SF1">
    <property type="entry name" value="UDP-N-ACETYLMURAMOYLALANINE--D-GLUTAMATE LIGASE"/>
    <property type="match status" value="1"/>
</dbReference>
<dbReference type="Pfam" id="PF02875">
    <property type="entry name" value="Mur_ligase_C"/>
    <property type="match status" value="1"/>
</dbReference>
<dbReference type="Pfam" id="PF08245">
    <property type="entry name" value="Mur_ligase_M"/>
    <property type="match status" value="1"/>
</dbReference>
<dbReference type="Pfam" id="PF21799">
    <property type="entry name" value="MurD-like_N"/>
    <property type="match status" value="1"/>
</dbReference>
<dbReference type="SUPFAM" id="SSF51984">
    <property type="entry name" value="MurCD N-terminal domain"/>
    <property type="match status" value="1"/>
</dbReference>
<dbReference type="SUPFAM" id="SSF53623">
    <property type="entry name" value="MurD-like peptide ligases, catalytic domain"/>
    <property type="match status" value="1"/>
</dbReference>
<dbReference type="SUPFAM" id="SSF53244">
    <property type="entry name" value="MurD-like peptide ligases, peptide-binding domain"/>
    <property type="match status" value="1"/>
</dbReference>
<reference key="1">
    <citation type="journal article" date="1997" name="J. Bacteriol.">
        <title>Identification and characterization of cell wall-cell division gene clusters in pathogenic Gram-positive cocci.</title>
        <authorList>
            <person name="Pucci M.J."/>
            <person name="Thanassi J.A."/>
            <person name="Discotto L.F."/>
            <person name="Kessler R.E."/>
            <person name="Dougherty T.J."/>
        </authorList>
    </citation>
    <scope>NUCLEOTIDE SEQUENCE [GENOMIC DNA]</scope>
    <source>
        <strain>A24836</strain>
    </source>
</reference>
<reference key="2">
    <citation type="journal article" date="2003" name="Science">
        <title>Role of mobile DNA in the evolution of vancomycin-resistant Enterococcus faecalis.</title>
        <authorList>
            <person name="Paulsen I.T."/>
            <person name="Banerjei L."/>
            <person name="Myers G.S.A."/>
            <person name="Nelson K.E."/>
            <person name="Seshadri R."/>
            <person name="Read T.D."/>
            <person name="Fouts D.E."/>
            <person name="Eisen J.A."/>
            <person name="Gill S.R."/>
            <person name="Heidelberg J.F."/>
            <person name="Tettelin H."/>
            <person name="Dodson R.J."/>
            <person name="Umayam L.A."/>
            <person name="Brinkac L.M."/>
            <person name="Beanan M.J."/>
            <person name="Daugherty S.C."/>
            <person name="DeBoy R.T."/>
            <person name="Durkin S.A."/>
            <person name="Kolonay J.F."/>
            <person name="Madupu R."/>
            <person name="Nelson W.C."/>
            <person name="Vamathevan J.J."/>
            <person name="Tran B."/>
            <person name="Upton J."/>
            <person name="Hansen T."/>
            <person name="Shetty J."/>
            <person name="Khouri H.M."/>
            <person name="Utterback T.R."/>
            <person name="Radune D."/>
            <person name="Ketchum K.A."/>
            <person name="Dougherty B.A."/>
            <person name="Fraser C.M."/>
        </authorList>
    </citation>
    <scope>NUCLEOTIDE SEQUENCE [LARGE SCALE GENOMIC DNA]</scope>
    <source>
        <strain>ATCC 700802 / V583</strain>
    </source>
</reference>
<organism>
    <name type="scientific">Enterococcus faecalis (strain ATCC 700802 / V583)</name>
    <dbReference type="NCBI Taxonomy" id="226185"/>
    <lineage>
        <taxon>Bacteria</taxon>
        <taxon>Bacillati</taxon>
        <taxon>Bacillota</taxon>
        <taxon>Bacilli</taxon>
        <taxon>Lactobacillales</taxon>
        <taxon>Enterococcaceae</taxon>
        <taxon>Enterococcus</taxon>
    </lineage>
</organism>
<comment type="function">
    <text evidence="1">Cell wall formation. Catalyzes the addition of glutamate to the nucleotide precursor UDP-N-acetylmuramoyl-L-alanine (UMA).</text>
</comment>
<comment type="catalytic activity">
    <reaction>
        <text>UDP-N-acetyl-alpha-D-muramoyl-L-alanine + D-glutamate + ATP = UDP-N-acetyl-alpha-D-muramoyl-L-alanyl-D-glutamate + ADP + phosphate + H(+)</text>
        <dbReference type="Rhea" id="RHEA:16429"/>
        <dbReference type="ChEBI" id="CHEBI:15378"/>
        <dbReference type="ChEBI" id="CHEBI:29986"/>
        <dbReference type="ChEBI" id="CHEBI:30616"/>
        <dbReference type="ChEBI" id="CHEBI:43474"/>
        <dbReference type="ChEBI" id="CHEBI:83898"/>
        <dbReference type="ChEBI" id="CHEBI:83900"/>
        <dbReference type="ChEBI" id="CHEBI:456216"/>
        <dbReference type="EC" id="6.3.2.9"/>
    </reaction>
</comment>
<comment type="pathway">
    <text>Cell wall biogenesis; peptidoglycan biosynthesis.</text>
</comment>
<comment type="subcellular location">
    <subcellularLocation>
        <location evidence="1">Cytoplasm</location>
    </subcellularLocation>
</comment>
<comment type="similarity">
    <text evidence="3">Belongs to the MurCDEF family.</text>
</comment>
<name>MURD_ENTFA</name>
<feature type="chain" id="PRO_0000109010" description="UDP-N-acetylmuramoylalanine--D-glutamate ligase">
    <location>
        <begin position="1"/>
        <end position="456"/>
    </location>
</feature>
<feature type="binding site" evidence="2">
    <location>
        <begin position="119"/>
        <end position="125"/>
    </location>
    <ligand>
        <name>ATP</name>
        <dbReference type="ChEBI" id="CHEBI:30616"/>
    </ligand>
</feature>
<feature type="sequence conflict" description="In Ref. 1; AAC45635." evidence="3" ref="1">
    <original>P</original>
    <variation>L</variation>
    <location>
        <position position="83"/>
    </location>
</feature>
<feature type="sequence conflict" description="In Ref. 1; AAC45635." evidence="3" ref="1">
    <original>N</original>
    <variation>D</variation>
    <location>
        <position position="165"/>
    </location>
</feature>
<feature type="sequence conflict" description="In Ref. 1; AAC45635." evidence="3" ref="1">
    <original>A</original>
    <variation>P</variation>
    <location>
        <position position="292"/>
    </location>
</feature>
<feature type="sequence conflict" description="In Ref. 1." evidence="3" ref="1">
    <original>R</original>
    <variation>K</variation>
    <location>
        <position position="303"/>
    </location>
</feature>
<feature type="sequence conflict" description="In Ref. 1." evidence="3" ref="1">
    <original>T</original>
    <variation>S</variation>
    <location>
        <position position="305"/>
    </location>
</feature>
<feature type="sequence conflict" description="In Ref. 1; AAC45635." evidence="3" ref="1">
    <original>I</original>
    <variation>F</variation>
    <location>
        <position position="336"/>
    </location>
</feature>
<feature type="sequence conflict" description="In Ref. 1; AAC45635." evidence="3" ref="1">
    <original>E</original>
    <variation>K</variation>
    <location>
        <position position="385"/>
    </location>
</feature>
<feature type="sequence conflict" description="In Ref. 1; AAC45635." evidence="3" ref="1">
    <original>A</original>
    <variation>P</variation>
    <location>
        <position position="394"/>
    </location>
</feature>
<gene>
    <name type="primary">murD</name>
    <name type="ordered locus">EF_0993</name>
</gene>
<keyword id="KW-0067">ATP-binding</keyword>
<keyword id="KW-0131">Cell cycle</keyword>
<keyword id="KW-0132">Cell division</keyword>
<keyword id="KW-0133">Cell shape</keyword>
<keyword id="KW-0961">Cell wall biogenesis/degradation</keyword>
<keyword id="KW-0963">Cytoplasm</keyword>
<keyword id="KW-0436">Ligase</keyword>
<keyword id="KW-0547">Nucleotide-binding</keyword>
<keyword id="KW-0573">Peptidoglycan synthesis</keyword>
<keyword id="KW-1185">Reference proteome</keyword>
<accession>O07108</accession>
<sequence length="456" mass="49698">MKKITTYQNKKVLVLGLAKSGVSAAKLLHELGALVTVNDAKQFDQNPDAQDLLTLGIRVVTGGHPIELLDEEFELIVKNPGIPYTNPLVAEALTRKIPIITEVELAGQIAECPIVGITGTNGKTTTTTMIGLLLNADRTAGEARLAGNIGFPASTVAQEATAKDNLVMELSSFQLMGIETFHPQIAVITNIFEAHLDYHGSRKEYVAAKWAIQKNMTAEDTLILNWNQVELQTLAKTTAANVLPFSTKEAVEGAYLLDGKLYFNEEYIMPADELGIPGSHNIENALAAICVAKLKNVSNAQIRQTLTNFSGVPHRTQFVGEVQQRRFYNDSKATNILATEMALSGFDNQKLLLLAGGLDRGNSFDELVPALLGLKAIVLFGETKEKLAEAAKKANIETILFAENVQTAVTIAFDYSEKDDTILLSPACASWDQYPNFEVRGEAFMQAVQQLKESEM</sequence>
<proteinExistence type="inferred from homology"/>
<protein>
    <recommendedName>
        <fullName>UDP-N-acetylmuramoylalanine--D-glutamate ligase</fullName>
        <ecNumber>6.3.2.9</ecNumber>
    </recommendedName>
    <alternativeName>
        <fullName>D-glutamic acid-adding enzyme</fullName>
    </alternativeName>
    <alternativeName>
        <fullName>UDP-N-acetylmuramoyl-L-alanyl-D-glutamate synthetase</fullName>
    </alternativeName>
</protein>
<evidence type="ECO:0000250" key="1"/>
<evidence type="ECO:0000255" key="2"/>
<evidence type="ECO:0000305" key="3"/>